<name>ZN574_HUMAN</name>
<accession>Q6ZN55</accession>
<accession>Q6IPE0</accession>
<accession>Q6ZN10</accession>
<accession>Q7L5Z5</accession>
<accession>Q8NCE3</accession>
<accession>Q9H6N0</accession>
<organism>
    <name type="scientific">Homo sapiens</name>
    <name type="common">Human</name>
    <dbReference type="NCBI Taxonomy" id="9606"/>
    <lineage>
        <taxon>Eukaryota</taxon>
        <taxon>Metazoa</taxon>
        <taxon>Chordata</taxon>
        <taxon>Craniata</taxon>
        <taxon>Vertebrata</taxon>
        <taxon>Euteleostomi</taxon>
        <taxon>Mammalia</taxon>
        <taxon>Eutheria</taxon>
        <taxon>Euarchontoglires</taxon>
        <taxon>Primates</taxon>
        <taxon>Haplorrhini</taxon>
        <taxon>Catarrhini</taxon>
        <taxon>Hominidae</taxon>
        <taxon>Homo</taxon>
    </lineage>
</organism>
<gene>
    <name type="primary">ZNF574</name>
</gene>
<feature type="chain" id="PRO_0000274861" description="Zinc finger protein 574">
    <location>
        <begin position="1"/>
        <end position="896"/>
    </location>
</feature>
<feature type="zinc finger region" description="C2H2-type 1" evidence="1">
    <location>
        <begin position="16"/>
        <end position="38"/>
    </location>
</feature>
<feature type="zinc finger region" description="C2H2-type 2" evidence="1">
    <location>
        <begin position="76"/>
        <end position="98"/>
    </location>
</feature>
<feature type="zinc finger region" description="C2H2-type 3" evidence="1">
    <location>
        <begin position="126"/>
        <end position="148"/>
    </location>
</feature>
<feature type="zinc finger region" description="C2H2-type 4" evidence="1">
    <location>
        <begin position="214"/>
        <end position="236"/>
    </location>
</feature>
<feature type="zinc finger region" description="C2H2-type 5" evidence="1">
    <location>
        <begin position="309"/>
        <end position="331"/>
    </location>
</feature>
<feature type="zinc finger region" description="C2H2-type 6" evidence="1">
    <location>
        <begin position="336"/>
        <end position="358"/>
    </location>
</feature>
<feature type="zinc finger region" description="C2H2-type 7" evidence="1">
    <location>
        <begin position="364"/>
        <end position="386"/>
    </location>
</feature>
<feature type="zinc finger region" description="C2H2-type 8" evidence="1">
    <location>
        <begin position="392"/>
        <end position="413"/>
    </location>
</feature>
<feature type="zinc finger region" description="C2H2-type 9" evidence="1">
    <location>
        <begin position="466"/>
        <end position="489"/>
    </location>
</feature>
<feature type="zinc finger region" description="C2H2-type 10; degenerate" evidence="1">
    <location>
        <begin position="495"/>
        <end position="517"/>
    </location>
</feature>
<feature type="zinc finger region" description="C2H2-type 11" evidence="1">
    <location>
        <begin position="523"/>
        <end position="545"/>
    </location>
</feature>
<feature type="zinc finger region" description="C2H2-type 12" evidence="1">
    <location>
        <begin position="551"/>
        <end position="573"/>
    </location>
</feature>
<feature type="zinc finger region" description="C2H2-type 13" evidence="1">
    <location>
        <begin position="579"/>
        <end position="601"/>
    </location>
</feature>
<feature type="zinc finger region" description="C2H2-type 14" evidence="1">
    <location>
        <begin position="607"/>
        <end position="630"/>
    </location>
</feature>
<feature type="zinc finger region" description="C2H2-type 15; degenerate" evidence="1">
    <location>
        <begin position="636"/>
        <end position="659"/>
    </location>
</feature>
<feature type="zinc finger region" description="C2H2-type 16" evidence="1">
    <location>
        <begin position="667"/>
        <end position="689"/>
    </location>
</feature>
<feature type="zinc finger region" description="C2H2-type 17" evidence="1">
    <location>
        <begin position="738"/>
        <end position="760"/>
    </location>
</feature>
<feature type="zinc finger region" description="C2H2-type 18" evidence="1">
    <location>
        <begin position="766"/>
        <end position="788"/>
    </location>
</feature>
<feature type="zinc finger region" description="C2H2-type 19" evidence="1">
    <location>
        <begin position="794"/>
        <end position="816"/>
    </location>
</feature>
<feature type="zinc finger region" description="C2H2-type 20" evidence="1">
    <location>
        <begin position="822"/>
        <end position="844"/>
    </location>
</feature>
<feature type="region of interest" description="Disordered" evidence="2">
    <location>
        <begin position="239"/>
        <end position="301"/>
    </location>
</feature>
<feature type="region of interest" description="Disordered" evidence="2">
    <location>
        <begin position="434"/>
        <end position="460"/>
    </location>
</feature>
<feature type="region of interest" description="Disordered" evidence="2">
    <location>
        <begin position="687"/>
        <end position="733"/>
    </location>
</feature>
<feature type="compositionally biased region" description="Polar residues" evidence="2">
    <location>
        <begin position="247"/>
        <end position="257"/>
    </location>
</feature>
<feature type="compositionally biased region" description="Basic and acidic residues" evidence="2">
    <location>
        <begin position="274"/>
        <end position="287"/>
    </location>
</feature>
<feature type="compositionally biased region" description="Low complexity" evidence="2">
    <location>
        <begin position="707"/>
        <end position="732"/>
    </location>
</feature>
<feature type="modified residue" description="Phosphoserine" evidence="9">
    <location>
        <position position="113"/>
    </location>
</feature>
<feature type="modified residue" description="Phosphoserine" evidence="5 6 9">
    <location>
        <position position="164"/>
    </location>
</feature>
<feature type="modified residue" description="Phosphoserine" evidence="6 8">
    <location>
        <position position="298"/>
    </location>
</feature>
<feature type="modified residue" description="Phosphoserine" evidence="6 7">
    <location>
        <position position="717"/>
    </location>
</feature>
<feature type="modified residue" description="Phosphothreonine" evidence="5">
    <location>
        <position position="724"/>
    </location>
</feature>
<feature type="modified residue" description="Phosphoserine" evidence="5 6 7">
    <location>
        <position position="728"/>
    </location>
</feature>
<feature type="modified residue" description="Asymmetric dimethylarginine" evidence="10">
    <location>
        <position position="832"/>
    </location>
</feature>
<feature type="splice variant" id="VSP_022878" description="In isoform 2." evidence="3">
    <original>M</original>
    <variation>MPRATWANSKERSWAESERGPRDTGNGGSKAERHIQEIETGRGGDRAKAHRRQRMRLRGTERASLGPGRRLGDSRGTDMPGARAQGLAAA</variation>
    <location>
        <position position="1"/>
    </location>
</feature>
<feature type="sequence variant" id="VAR_030351" description="In dbSNP:rs3745226.">
    <original>R</original>
    <variation>Q</variation>
    <location>
        <position position="332"/>
    </location>
</feature>
<feature type="sequence variant" id="VAR_052870" description="In dbSNP:rs35898322.">
    <original>T</original>
    <variation>S</variation>
    <location>
        <position position="711"/>
    </location>
</feature>
<feature type="sequence variant" id="VAR_030352" description="In dbSNP:rs3745228.">
    <original>R</original>
    <variation>Q</variation>
    <location>
        <position position="785"/>
    </location>
</feature>
<feature type="sequence conflict" description="In Ref. 1; BAD18565." evidence="4" ref="1">
    <original>H</original>
    <variation>R</variation>
    <location>
        <position position="513"/>
    </location>
</feature>
<feature type="sequence conflict" description="In Ref. 1; BAC11210." evidence="4" ref="1">
    <original>E</original>
    <variation>G</variation>
    <location>
        <position position="811"/>
    </location>
</feature>
<comment type="function">
    <text>May be involved in transcriptional regulation.</text>
</comment>
<comment type="interaction">
    <interactant intactId="EBI-2818349">
        <id>Q6ZN55</id>
    </interactant>
    <interactant intactId="EBI-2828217">
        <id>O43422</id>
        <label>THAP12</label>
    </interactant>
    <organismsDiffer>false</organismsDiffer>
    <experiments>4</experiments>
</comment>
<comment type="interaction">
    <interactant intactId="EBI-17189720">
        <id>Q6ZN55-2</id>
    </interactant>
    <interactant intactId="EBI-739624">
        <id>Q8NHQ1</id>
        <label>CEP70</label>
    </interactant>
    <organismsDiffer>false</organismsDiffer>
    <experiments>3</experiments>
</comment>
<comment type="interaction">
    <interactant intactId="EBI-17189720">
        <id>Q6ZN55-2</id>
    </interactant>
    <interactant intactId="EBI-10173222">
        <id>A2VCK2</id>
        <label>DCDC2B</label>
    </interactant>
    <organismsDiffer>false</organismsDiffer>
    <experiments>3</experiments>
</comment>
<comment type="interaction">
    <interactant intactId="EBI-17189720">
        <id>Q6ZN55-2</id>
    </interactant>
    <interactant intactId="EBI-5916454">
        <id>A6NEM1</id>
        <label>GOLGA6L9</label>
    </interactant>
    <organismsDiffer>false</organismsDiffer>
    <experiments>3</experiments>
</comment>
<comment type="interaction">
    <interactant intactId="EBI-17189720">
        <id>Q6ZN55-2</id>
    </interactant>
    <interactant intactId="EBI-12039345">
        <id>Q9UBR4-2</id>
        <label>LHX3</label>
    </interactant>
    <organismsDiffer>false</organismsDiffer>
    <experiments>3</experiments>
</comment>
<comment type="interaction">
    <interactant intactId="EBI-17189720">
        <id>Q6ZN55-2</id>
    </interactant>
    <interactant intactId="EBI-12003882">
        <id>Q5JTD7</id>
        <label>LRRC73</label>
    </interactant>
    <organismsDiffer>false</organismsDiffer>
    <experiments>3</experiments>
</comment>
<comment type="interaction">
    <interactant intactId="EBI-17189720">
        <id>Q6ZN55-2</id>
    </interactant>
    <interactant intactId="EBI-16439278">
        <id>Q6FHY5</id>
        <label>MEOX2</label>
    </interactant>
    <organismsDiffer>false</organismsDiffer>
    <experiments>3</experiments>
</comment>
<comment type="interaction">
    <interactant intactId="EBI-17189720">
        <id>Q6ZN55-2</id>
    </interactant>
    <interactant intactId="EBI-12029004">
        <id>P78424</id>
        <label>POU6F2</label>
    </interactant>
    <organismsDiffer>false</organismsDiffer>
    <experiments>3</experiments>
</comment>
<comment type="interaction">
    <interactant intactId="EBI-17189720">
        <id>Q6ZN55-2</id>
    </interactant>
    <interactant intactId="EBI-355744">
        <id>Q12933</id>
        <label>TRAF2</label>
    </interactant>
    <organismsDiffer>false</organismsDiffer>
    <experiments>3</experiments>
</comment>
<comment type="subcellular location">
    <subcellularLocation>
        <location evidence="4">Nucleus</location>
    </subcellularLocation>
</comment>
<comment type="alternative products">
    <event type="alternative splicing"/>
    <isoform>
        <id>Q6ZN55-1</id>
        <name>1</name>
        <sequence type="displayed"/>
    </isoform>
    <isoform>
        <id>Q6ZN55-2</id>
        <name>2</name>
        <sequence type="described" ref="VSP_022878"/>
    </isoform>
</comment>
<comment type="similarity">
    <text evidence="4">Belongs to the krueppel C2H2-type zinc-finger protein family.</text>
</comment>
<protein>
    <recommendedName>
        <fullName>Zinc finger protein 574</fullName>
    </recommendedName>
</protein>
<dbReference type="EMBL" id="AK025712">
    <property type="protein sequence ID" value="BAB15225.1"/>
    <property type="molecule type" value="mRNA"/>
</dbReference>
<dbReference type="EMBL" id="AK074788">
    <property type="protein sequence ID" value="BAC11210.1"/>
    <property type="molecule type" value="mRNA"/>
</dbReference>
<dbReference type="EMBL" id="AK131369">
    <property type="protein sequence ID" value="BAD18520.1"/>
    <property type="molecule type" value="mRNA"/>
</dbReference>
<dbReference type="EMBL" id="AK131418">
    <property type="protein sequence ID" value="BAD18565.1"/>
    <property type="molecule type" value="mRNA"/>
</dbReference>
<dbReference type="EMBL" id="BC001184">
    <property type="protein sequence ID" value="AAH01184.2"/>
    <property type="molecule type" value="mRNA"/>
</dbReference>
<dbReference type="EMBL" id="BC071962">
    <property type="protein sequence ID" value="AAH71962.1"/>
    <property type="molecule type" value="mRNA"/>
</dbReference>
<dbReference type="CCDS" id="CCDS12596.1">
    <molecule id="Q6ZN55-1"/>
</dbReference>
<dbReference type="RefSeq" id="NP_001317448.1">
    <property type="nucleotide sequence ID" value="NM_001330519.1"/>
</dbReference>
<dbReference type="RefSeq" id="NP_073589.4">
    <molecule id="Q6ZN55-1"/>
    <property type="nucleotide sequence ID" value="NM_022752.5"/>
</dbReference>
<dbReference type="RefSeq" id="XP_005259216.1">
    <molecule id="Q6ZN55-1"/>
    <property type="nucleotide sequence ID" value="XM_005259159.4"/>
</dbReference>
<dbReference type="RefSeq" id="XP_011525530.1">
    <molecule id="Q6ZN55-1"/>
    <property type="nucleotide sequence ID" value="XM_011527228.4"/>
</dbReference>
<dbReference type="RefSeq" id="XP_011525531.1">
    <molecule id="Q6ZN55-1"/>
    <property type="nucleotide sequence ID" value="XM_011527229.4"/>
</dbReference>
<dbReference type="RefSeq" id="XP_011525532.1">
    <molecule id="Q6ZN55-1"/>
    <property type="nucleotide sequence ID" value="XM_011527230.4"/>
</dbReference>
<dbReference type="RefSeq" id="XP_054177755.1">
    <molecule id="Q6ZN55-1"/>
    <property type="nucleotide sequence ID" value="XM_054321780.1"/>
</dbReference>
<dbReference type="RefSeq" id="XP_054177756.1">
    <molecule id="Q6ZN55-1"/>
    <property type="nucleotide sequence ID" value="XM_054321781.1"/>
</dbReference>
<dbReference type="RefSeq" id="XP_054177757.1">
    <molecule id="Q6ZN55-1"/>
    <property type="nucleotide sequence ID" value="XM_054321782.1"/>
</dbReference>
<dbReference type="RefSeq" id="XP_054177758.1">
    <molecule id="Q6ZN55-1"/>
    <property type="nucleotide sequence ID" value="XM_054321783.1"/>
</dbReference>
<dbReference type="SMR" id="Q6ZN55"/>
<dbReference type="BioGRID" id="122276">
    <property type="interactions" value="296"/>
</dbReference>
<dbReference type="FunCoup" id="Q6ZN55">
    <property type="interactions" value="1601"/>
</dbReference>
<dbReference type="IntAct" id="Q6ZN55">
    <property type="interactions" value="177"/>
</dbReference>
<dbReference type="MINT" id="Q6ZN55"/>
<dbReference type="STRING" id="9606.ENSP00000222339"/>
<dbReference type="GlyGen" id="Q6ZN55">
    <property type="glycosylation" value="1 site, 1 O-linked glycan (1 site)"/>
</dbReference>
<dbReference type="iPTMnet" id="Q6ZN55"/>
<dbReference type="PhosphoSitePlus" id="Q6ZN55"/>
<dbReference type="BioMuta" id="ZNF574"/>
<dbReference type="DMDM" id="125991263"/>
<dbReference type="jPOST" id="Q6ZN55"/>
<dbReference type="MassIVE" id="Q6ZN55"/>
<dbReference type="PaxDb" id="9606-ENSP00000469029"/>
<dbReference type="PeptideAtlas" id="Q6ZN55"/>
<dbReference type="ProteomicsDB" id="67982">
    <molecule id="Q6ZN55-1"/>
</dbReference>
<dbReference type="ProteomicsDB" id="67983">
    <molecule id="Q6ZN55-2"/>
</dbReference>
<dbReference type="Pumba" id="Q6ZN55"/>
<dbReference type="Antibodypedia" id="30883">
    <property type="antibodies" value="61 antibodies from 20 providers"/>
</dbReference>
<dbReference type="DNASU" id="64763"/>
<dbReference type="Ensembl" id="ENST00000359044.5">
    <molecule id="Q6ZN55-1"/>
    <property type="protein sequence ID" value="ENSP00000351939.3"/>
    <property type="gene ID" value="ENSG00000105732.13"/>
</dbReference>
<dbReference type="Ensembl" id="ENST00000600245.1">
    <molecule id="Q6ZN55-1"/>
    <property type="protein sequence ID" value="ENSP00000469029.1"/>
    <property type="gene ID" value="ENSG00000105732.13"/>
</dbReference>
<dbReference type="GeneID" id="64763"/>
<dbReference type="KEGG" id="hsa:64763"/>
<dbReference type="MANE-Select" id="ENST00000359044.5">
    <property type="protein sequence ID" value="ENSP00000351939.3"/>
    <property type="RefSeq nucleotide sequence ID" value="NM_022752.6"/>
    <property type="RefSeq protein sequence ID" value="NP_073589.4"/>
</dbReference>
<dbReference type="UCSC" id="uc002osk.6">
    <molecule id="Q6ZN55-1"/>
    <property type="organism name" value="human"/>
</dbReference>
<dbReference type="AGR" id="HGNC:26166"/>
<dbReference type="CTD" id="64763"/>
<dbReference type="DisGeNET" id="64763"/>
<dbReference type="GeneCards" id="ZNF574"/>
<dbReference type="HGNC" id="HGNC:26166">
    <property type="gene designation" value="ZNF574"/>
</dbReference>
<dbReference type="HPA" id="ENSG00000105732">
    <property type="expression patterns" value="Low tissue specificity"/>
</dbReference>
<dbReference type="neXtProt" id="NX_Q6ZN55"/>
<dbReference type="OpenTargets" id="ENSG00000105732"/>
<dbReference type="PharmGKB" id="PA134916492"/>
<dbReference type="VEuPathDB" id="HostDB:ENSG00000105732"/>
<dbReference type="eggNOG" id="KOG1721">
    <property type="taxonomic scope" value="Eukaryota"/>
</dbReference>
<dbReference type="GeneTree" id="ENSGT00940000161799"/>
<dbReference type="HOGENOM" id="CLU_002678_24_1_1"/>
<dbReference type="InParanoid" id="Q6ZN55"/>
<dbReference type="OMA" id="DCAKPFN"/>
<dbReference type="OrthoDB" id="8922241at2759"/>
<dbReference type="PAN-GO" id="Q6ZN55">
    <property type="GO annotations" value="4 GO annotations based on evolutionary models"/>
</dbReference>
<dbReference type="PhylomeDB" id="Q6ZN55"/>
<dbReference type="TreeFam" id="TF350791"/>
<dbReference type="PathwayCommons" id="Q6ZN55"/>
<dbReference type="SignaLink" id="Q6ZN55"/>
<dbReference type="BioGRID-ORCS" id="64763">
    <property type="hits" value="548 hits in 1181 CRISPR screens"/>
</dbReference>
<dbReference type="ChiTaRS" id="ZNF574">
    <property type="organism name" value="human"/>
</dbReference>
<dbReference type="GenomeRNAi" id="64763"/>
<dbReference type="Pharos" id="Q6ZN55">
    <property type="development level" value="Tdark"/>
</dbReference>
<dbReference type="PRO" id="PR:Q6ZN55"/>
<dbReference type="Proteomes" id="UP000005640">
    <property type="component" value="Chromosome 19"/>
</dbReference>
<dbReference type="RNAct" id="Q6ZN55">
    <property type="molecule type" value="protein"/>
</dbReference>
<dbReference type="Bgee" id="ENSG00000105732">
    <property type="expression patterns" value="Expressed in cerebellar vermis and 201 other cell types or tissues"/>
</dbReference>
<dbReference type="ExpressionAtlas" id="Q6ZN55">
    <property type="expression patterns" value="baseline and differential"/>
</dbReference>
<dbReference type="GO" id="GO:0005634">
    <property type="term" value="C:nucleus"/>
    <property type="evidence" value="ECO:0000318"/>
    <property type="project" value="GO_Central"/>
</dbReference>
<dbReference type="GO" id="GO:0003677">
    <property type="term" value="F:DNA binding"/>
    <property type="evidence" value="ECO:0007669"/>
    <property type="project" value="UniProtKB-KW"/>
</dbReference>
<dbReference type="GO" id="GO:0008270">
    <property type="term" value="F:zinc ion binding"/>
    <property type="evidence" value="ECO:0007669"/>
    <property type="project" value="UniProtKB-KW"/>
</dbReference>
<dbReference type="GO" id="GO:0006357">
    <property type="term" value="P:regulation of transcription by RNA polymerase II"/>
    <property type="evidence" value="ECO:0000318"/>
    <property type="project" value="GO_Central"/>
</dbReference>
<dbReference type="FunFam" id="3.30.160.60:FF:000145">
    <property type="entry name" value="Zinc finger protein 574"/>
    <property type="match status" value="1"/>
</dbReference>
<dbReference type="FunFam" id="3.30.160.60:FF:000202">
    <property type="entry name" value="Zinc finger protein 574"/>
    <property type="match status" value="1"/>
</dbReference>
<dbReference type="FunFam" id="3.30.160.60:FF:000788">
    <property type="entry name" value="Zinc finger protein 574"/>
    <property type="match status" value="1"/>
</dbReference>
<dbReference type="FunFam" id="3.30.160.60:FF:001231">
    <property type="entry name" value="Zinc finger protein 574"/>
    <property type="match status" value="1"/>
</dbReference>
<dbReference type="FunFam" id="3.30.160.60:FF:000381">
    <property type="entry name" value="zinc finger protein 574"/>
    <property type="match status" value="3"/>
</dbReference>
<dbReference type="FunFam" id="3.30.160.60:FF:001169">
    <property type="entry name" value="zinc finger protein 574"/>
    <property type="match status" value="1"/>
</dbReference>
<dbReference type="FunFam" id="3.30.160.60:FF:001184">
    <property type="entry name" value="zinc finger protein 574"/>
    <property type="match status" value="1"/>
</dbReference>
<dbReference type="FunFam" id="3.30.160.60:FF:001285">
    <property type="entry name" value="zinc finger protein 574"/>
    <property type="match status" value="1"/>
</dbReference>
<dbReference type="Gene3D" id="3.30.160.60">
    <property type="entry name" value="Classic Zinc Finger"/>
    <property type="match status" value="13"/>
</dbReference>
<dbReference type="InterPro" id="IPR050636">
    <property type="entry name" value="C2H2-ZF_domain-containing"/>
</dbReference>
<dbReference type="InterPro" id="IPR036236">
    <property type="entry name" value="Znf_C2H2_sf"/>
</dbReference>
<dbReference type="InterPro" id="IPR013087">
    <property type="entry name" value="Znf_C2H2_type"/>
</dbReference>
<dbReference type="PANTHER" id="PTHR47772:SF13">
    <property type="entry name" value="GASTRULA ZINC FINGER PROTEIN XLCGF49.1-LIKE-RELATED"/>
    <property type="match status" value="1"/>
</dbReference>
<dbReference type="PANTHER" id="PTHR47772">
    <property type="entry name" value="ZINC FINGER PROTEIN 200"/>
    <property type="match status" value="1"/>
</dbReference>
<dbReference type="Pfam" id="PF00096">
    <property type="entry name" value="zf-C2H2"/>
    <property type="match status" value="6"/>
</dbReference>
<dbReference type="Pfam" id="PF13912">
    <property type="entry name" value="zf-C2H2_6"/>
    <property type="match status" value="2"/>
</dbReference>
<dbReference type="Pfam" id="PF12874">
    <property type="entry name" value="zf-met"/>
    <property type="match status" value="1"/>
</dbReference>
<dbReference type="SMART" id="SM00355">
    <property type="entry name" value="ZnF_C2H2"/>
    <property type="match status" value="20"/>
</dbReference>
<dbReference type="SUPFAM" id="SSF57667">
    <property type="entry name" value="beta-beta-alpha zinc fingers"/>
    <property type="match status" value="11"/>
</dbReference>
<dbReference type="PROSITE" id="PS00028">
    <property type="entry name" value="ZINC_FINGER_C2H2_1"/>
    <property type="match status" value="18"/>
</dbReference>
<dbReference type="PROSITE" id="PS50157">
    <property type="entry name" value="ZINC_FINGER_C2H2_2"/>
    <property type="match status" value="19"/>
</dbReference>
<proteinExistence type="evidence at protein level"/>
<sequence>MTEESEETVLYIEHRYVCSECNQLYGSLEEVLMHQNSHVPQQHFELVGVADPGVTVATDTASGTGLYQTLVQESQYQCLECGQLLMSPSQLLEHQELHLKMMAPQEAVPAEPSPKAPPLSSSTIHYECVDCKALFASQELWLNHRQTHLRATPTKAPAPVVLGSPVVLGPPVGQARVAVEHSYRKAEEGGEGATVPSAAATTTEVVTEVELLLYKCSECSQLFQLPADFLEHQATHFPAPVPESQEPALQQEVQASSPAEVPVSQPDPLPASDHSYELRNGEAIGRDRRGRRARRNNSGEAGGAATQELFCSACDQLFLSPHQLQQHLRSHREGVFKCPLCSRVFPSPSSLDQHLGDHSSESHFLCVDCGLAFGTEALLLAHRRAHTPNPLHSCPCGKTFVNLTKFLYHRRTHGVGGVPLPTTPVPPEEPVIGFPEPAPAETGEPEAPEPPVSEETSAGPAAPGTYRCLLCSREFGKALQLTRHQRFVHRLERRHKCSICGKMFKKKSHVRNHLRTHTGERPFPCPDCSKPFNSPANLARHRLTHTGERPYRCGDCGKAFTQSSTLRQHRLVHAQHFPYRCQECGVRFHRPYRLLMHRYHHTGEYPYKCRECPRSFLLRRLLEVHQLVVHAGRQPHRCPSCGAAFPSSLRLREHRCAAAAAQAPRRFECGTCGKKVGSAARLQAHEAAHAAAGPGEVLAKEPPAPRAPRATRAPVASPAALGSTATASPAAPARRRGLECSECKKLFSTETSLQVHRRIHTGERPYPCPDCGKAFRQSTHLKDHRRLHTGERPFACEVCGKAFAISMRLAEHRRIHTGERPYSCPDCGKSYRSFSNLWKHRKTHQQQHQAAVRQQLAEAEAAVGLAVMETAVEALPLVEAIEIYPLAEAEGVQISG</sequence>
<keyword id="KW-0025">Alternative splicing</keyword>
<keyword id="KW-0238">DNA-binding</keyword>
<keyword id="KW-0479">Metal-binding</keyword>
<keyword id="KW-0488">Methylation</keyword>
<keyword id="KW-0539">Nucleus</keyword>
<keyword id="KW-0597">Phosphoprotein</keyword>
<keyword id="KW-1267">Proteomics identification</keyword>
<keyword id="KW-1185">Reference proteome</keyword>
<keyword id="KW-0677">Repeat</keyword>
<keyword id="KW-0804">Transcription</keyword>
<keyword id="KW-0805">Transcription regulation</keyword>
<keyword id="KW-0862">Zinc</keyword>
<keyword id="KW-0863">Zinc-finger</keyword>
<evidence type="ECO:0000255" key="1">
    <source>
        <dbReference type="PROSITE-ProRule" id="PRU00042"/>
    </source>
</evidence>
<evidence type="ECO:0000256" key="2">
    <source>
        <dbReference type="SAM" id="MobiDB-lite"/>
    </source>
</evidence>
<evidence type="ECO:0000303" key="3">
    <source>
    </source>
</evidence>
<evidence type="ECO:0000305" key="4"/>
<evidence type="ECO:0007744" key="5">
    <source>
    </source>
</evidence>
<evidence type="ECO:0007744" key="6">
    <source>
    </source>
</evidence>
<evidence type="ECO:0007744" key="7">
    <source>
    </source>
</evidence>
<evidence type="ECO:0007744" key="8">
    <source>
    </source>
</evidence>
<evidence type="ECO:0007744" key="9">
    <source>
    </source>
</evidence>
<evidence type="ECO:0007744" key="10">
    <source>
    </source>
</evidence>
<reference key="1">
    <citation type="journal article" date="2004" name="Nat. Genet.">
        <title>Complete sequencing and characterization of 21,243 full-length human cDNAs.</title>
        <authorList>
            <person name="Ota T."/>
            <person name="Suzuki Y."/>
            <person name="Nishikawa T."/>
            <person name="Otsuki T."/>
            <person name="Sugiyama T."/>
            <person name="Irie R."/>
            <person name="Wakamatsu A."/>
            <person name="Hayashi K."/>
            <person name="Sato H."/>
            <person name="Nagai K."/>
            <person name="Kimura K."/>
            <person name="Makita H."/>
            <person name="Sekine M."/>
            <person name="Obayashi M."/>
            <person name="Nishi T."/>
            <person name="Shibahara T."/>
            <person name="Tanaka T."/>
            <person name="Ishii S."/>
            <person name="Yamamoto J."/>
            <person name="Saito K."/>
            <person name="Kawai Y."/>
            <person name="Isono Y."/>
            <person name="Nakamura Y."/>
            <person name="Nagahari K."/>
            <person name="Murakami K."/>
            <person name="Yasuda T."/>
            <person name="Iwayanagi T."/>
            <person name="Wagatsuma M."/>
            <person name="Shiratori A."/>
            <person name="Sudo H."/>
            <person name="Hosoiri T."/>
            <person name="Kaku Y."/>
            <person name="Kodaira H."/>
            <person name="Kondo H."/>
            <person name="Sugawara M."/>
            <person name="Takahashi M."/>
            <person name="Kanda K."/>
            <person name="Yokoi T."/>
            <person name="Furuya T."/>
            <person name="Kikkawa E."/>
            <person name="Omura Y."/>
            <person name="Abe K."/>
            <person name="Kamihara K."/>
            <person name="Katsuta N."/>
            <person name="Sato K."/>
            <person name="Tanikawa M."/>
            <person name="Yamazaki M."/>
            <person name="Ninomiya K."/>
            <person name="Ishibashi T."/>
            <person name="Yamashita H."/>
            <person name="Murakawa K."/>
            <person name="Fujimori K."/>
            <person name="Tanai H."/>
            <person name="Kimata M."/>
            <person name="Watanabe M."/>
            <person name="Hiraoka S."/>
            <person name="Chiba Y."/>
            <person name="Ishida S."/>
            <person name="Ono Y."/>
            <person name="Takiguchi S."/>
            <person name="Watanabe S."/>
            <person name="Yosida M."/>
            <person name="Hotuta T."/>
            <person name="Kusano J."/>
            <person name="Kanehori K."/>
            <person name="Takahashi-Fujii A."/>
            <person name="Hara H."/>
            <person name="Tanase T.-O."/>
            <person name="Nomura Y."/>
            <person name="Togiya S."/>
            <person name="Komai F."/>
            <person name="Hara R."/>
            <person name="Takeuchi K."/>
            <person name="Arita M."/>
            <person name="Imose N."/>
            <person name="Musashino K."/>
            <person name="Yuuki H."/>
            <person name="Oshima A."/>
            <person name="Sasaki N."/>
            <person name="Aotsuka S."/>
            <person name="Yoshikawa Y."/>
            <person name="Matsunawa H."/>
            <person name="Ichihara T."/>
            <person name="Shiohata N."/>
            <person name="Sano S."/>
            <person name="Moriya S."/>
            <person name="Momiyama H."/>
            <person name="Satoh N."/>
            <person name="Takami S."/>
            <person name="Terashima Y."/>
            <person name="Suzuki O."/>
            <person name="Nakagawa S."/>
            <person name="Senoh A."/>
            <person name="Mizoguchi H."/>
            <person name="Goto Y."/>
            <person name="Shimizu F."/>
            <person name="Wakebe H."/>
            <person name="Hishigaki H."/>
            <person name="Watanabe T."/>
            <person name="Sugiyama A."/>
            <person name="Takemoto M."/>
            <person name="Kawakami B."/>
            <person name="Yamazaki M."/>
            <person name="Watanabe K."/>
            <person name="Kumagai A."/>
            <person name="Itakura S."/>
            <person name="Fukuzumi Y."/>
            <person name="Fujimori Y."/>
            <person name="Komiyama M."/>
            <person name="Tashiro H."/>
            <person name="Tanigami A."/>
            <person name="Fujiwara T."/>
            <person name="Ono T."/>
            <person name="Yamada K."/>
            <person name="Fujii Y."/>
            <person name="Ozaki K."/>
            <person name="Hirao M."/>
            <person name="Ohmori Y."/>
            <person name="Kawabata A."/>
            <person name="Hikiji T."/>
            <person name="Kobatake N."/>
            <person name="Inagaki H."/>
            <person name="Ikema Y."/>
            <person name="Okamoto S."/>
            <person name="Okitani R."/>
            <person name="Kawakami T."/>
            <person name="Noguchi S."/>
            <person name="Itoh T."/>
            <person name="Shigeta K."/>
            <person name="Senba T."/>
            <person name="Matsumura K."/>
            <person name="Nakajima Y."/>
            <person name="Mizuno T."/>
            <person name="Morinaga M."/>
            <person name="Sasaki M."/>
            <person name="Togashi T."/>
            <person name="Oyama M."/>
            <person name="Hata H."/>
            <person name="Watanabe M."/>
            <person name="Komatsu T."/>
            <person name="Mizushima-Sugano J."/>
            <person name="Satoh T."/>
            <person name="Shirai Y."/>
            <person name="Takahashi Y."/>
            <person name="Nakagawa K."/>
            <person name="Okumura K."/>
            <person name="Nagase T."/>
            <person name="Nomura N."/>
            <person name="Kikuchi H."/>
            <person name="Masuho Y."/>
            <person name="Yamashita R."/>
            <person name="Nakai K."/>
            <person name="Yada T."/>
            <person name="Nakamura Y."/>
            <person name="Ohara O."/>
            <person name="Isogai T."/>
            <person name="Sugano S."/>
        </authorList>
    </citation>
    <scope>NUCLEOTIDE SEQUENCE [LARGE SCALE MRNA] (ISOFORMS 1 AND 2)</scope>
    <source>
        <tissue>Brain</tissue>
        <tissue>Cerebellum</tissue>
        <tissue>Hepatoma</tissue>
        <tissue>Teratocarcinoma</tissue>
    </source>
</reference>
<reference key="2">
    <citation type="journal article" date="2004" name="Genome Res.">
        <title>The status, quality, and expansion of the NIH full-length cDNA project: the Mammalian Gene Collection (MGC).</title>
        <authorList>
            <consortium name="The MGC Project Team"/>
        </authorList>
    </citation>
    <scope>NUCLEOTIDE SEQUENCE [LARGE SCALE MRNA] (ISOFORM 1)</scope>
    <source>
        <tissue>Brain</tissue>
        <tissue>Mammary gland</tissue>
    </source>
</reference>
<reference key="3">
    <citation type="journal article" date="2006" name="Nat. Biotechnol.">
        <title>A probability-based approach for high-throughput protein phosphorylation analysis and site localization.</title>
        <authorList>
            <person name="Beausoleil S.A."/>
            <person name="Villen J."/>
            <person name="Gerber S.A."/>
            <person name="Rush J."/>
            <person name="Gygi S.P."/>
        </authorList>
    </citation>
    <scope>PHOSPHORYLATION [LARGE SCALE ANALYSIS] AT SER-164; THR-724 AND SER-728</scope>
    <scope>IDENTIFICATION BY MASS SPECTROMETRY [LARGE SCALE ANALYSIS]</scope>
    <source>
        <tissue>Cervix carcinoma</tissue>
    </source>
</reference>
<reference key="4">
    <citation type="journal article" date="2008" name="J. Proteome Res.">
        <title>Combining protein-based IMAC, peptide-based IMAC, and MudPIT for efficient phosphoproteomic analysis.</title>
        <authorList>
            <person name="Cantin G.T."/>
            <person name="Yi W."/>
            <person name="Lu B."/>
            <person name="Park S.K."/>
            <person name="Xu T."/>
            <person name="Lee J.-D."/>
            <person name="Yates J.R. III"/>
        </authorList>
    </citation>
    <scope>IDENTIFICATION BY MASS SPECTROMETRY [LARGE SCALE ANALYSIS]</scope>
    <source>
        <tissue>Cervix carcinoma</tissue>
    </source>
</reference>
<reference key="5">
    <citation type="journal article" date="2008" name="Proc. Natl. Acad. Sci. U.S.A.">
        <title>A quantitative atlas of mitotic phosphorylation.</title>
        <authorList>
            <person name="Dephoure N."/>
            <person name="Zhou C."/>
            <person name="Villen J."/>
            <person name="Beausoleil S.A."/>
            <person name="Bakalarski C.E."/>
            <person name="Elledge S.J."/>
            <person name="Gygi S.P."/>
        </authorList>
    </citation>
    <scope>PHOSPHORYLATION [LARGE SCALE ANALYSIS] AT SER-164; SER-298; SER-717 AND SER-728</scope>
    <scope>IDENTIFICATION BY MASS SPECTROMETRY [LARGE SCALE ANALYSIS]</scope>
    <source>
        <tissue>Cervix carcinoma</tissue>
    </source>
</reference>
<reference key="6">
    <citation type="journal article" date="2010" name="Sci. Signal.">
        <title>Quantitative phosphoproteomics reveals widespread full phosphorylation site occupancy during mitosis.</title>
        <authorList>
            <person name="Olsen J.V."/>
            <person name="Vermeulen M."/>
            <person name="Santamaria A."/>
            <person name="Kumar C."/>
            <person name="Miller M.L."/>
            <person name="Jensen L.J."/>
            <person name="Gnad F."/>
            <person name="Cox J."/>
            <person name="Jensen T.S."/>
            <person name="Nigg E.A."/>
            <person name="Brunak S."/>
            <person name="Mann M."/>
        </authorList>
    </citation>
    <scope>PHOSPHORYLATION [LARGE SCALE ANALYSIS] AT SER-717 AND SER-728</scope>
    <scope>IDENTIFICATION BY MASS SPECTROMETRY [LARGE SCALE ANALYSIS]</scope>
    <source>
        <tissue>Cervix carcinoma</tissue>
    </source>
</reference>
<reference key="7">
    <citation type="journal article" date="2011" name="Sci. Signal.">
        <title>System-wide temporal characterization of the proteome and phosphoproteome of human embryonic stem cell differentiation.</title>
        <authorList>
            <person name="Rigbolt K.T."/>
            <person name="Prokhorova T.A."/>
            <person name="Akimov V."/>
            <person name="Henningsen J."/>
            <person name="Johansen P.T."/>
            <person name="Kratchmarova I."/>
            <person name="Kassem M."/>
            <person name="Mann M."/>
            <person name="Olsen J.V."/>
            <person name="Blagoev B."/>
        </authorList>
    </citation>
    <scope>PHOSPHORYLATION [LARGE SCALE ANALYSIS] AT SER-298</scope>
    <scope>IDENTIFICATION BY MASS SPECTROMETRY [LARGE SCALE ANALYSIS]</scope>
</reference>
<reference key="8">
    <citation type="journal article" date="2013" name="J. Proteome Res.">
        <title>Toward a comprehensive characterization of a human cancer cell phosphoproteome.</title>
        <authorList>
            <person name="Zhou H."/>
            <person name="Di Palma S."/>
            <person name="Preisinger C."/>
            <person name="Peng M."/>
            <person name="Polat A.N."/>
            <person name="Heck A.J."/>
            <person name="Mohammed S."/>
        </authorList>
    </citation>
    <scope>PHOSPHORYLATION [LARGE SCALE ANALYSIS] AT SER-113 AND SER-164</scope>
    <scope>IDENTIFICATION BY MASS SPECTROMETRY [LARGE SCALE ANALYSIS]</scope>
    <source>
        <tissue>Erythroleukemia</tissue>
    </source>
</reference>
<reference key="9">
    <citation type="journal article" date="2014" name="Mol. Cell. Proteomics">
        <title>Immunoaffinity enrichment and mass spectrometry analysis of protein methylation.</title>
        <authorList>
            <person name="Guo A."/>
            <person name="Gu H."/>
            <person name="Zhou J."/>
            <person name="Mulhern D."/>
            <person name="Wang Y."/>
            <person name="Lee K.A."/>
            <person name="Yang V."/>
            <person name="Aguiar M."/>
            <person name="Kornhauser J."/>
            <person name="Jia X."/>
            <person name="Ren J."/>
            <person name="Beausoleil S.A."/>
            <person name="Silva J.C."/>
            <person name="Vemulapalli V."/>
            <person name="Bedford M.T."/>
            <person name="Comb M.J."/>
        </authorList>
    </citation>
    <scope>METHYLATION [LARGE SCALE ANALYSIS] AT ARG-832</scope>
    <scope>IDENTIFICATION BY MASS SPECTROMETRY [LARGE SCALE ANALYSIS]</scope>
    <source>
        <tissue>Colon carcinoma</tissue>
    </source>
</reference>